<reference key="1">
    <citation type="journal article" date="1988" name="Mol. Gen. Genet.">
        <title>Comparative analysis of genes encoding methyl coenzyme M reductase in methanogenic bacteria.</title>
        <authorList>
            <person name="Klein A."/>
            <person name="Allmansberger R."/>
            <person name="Bokranz M."/>
            <person name="Knaub S."/>
            <person name="Mueller B."/>
            <person name="Muth E."/>
        </authorList>
    </citation>
    <scope>NUCLEOTIDE SEQUENCE [GENOMIC DNA]</scope>
    <source>
        <strain>ATCC 33273 / DSM 1537 / NBRC 100457 / OCM 70 / PS</strain>
    </source>
</reference>
<protein>
    <recommendedName>
        <fullName>Methyl-coenzyme M reductase operon protein D</fullName>
    </recommendedName>
</protein>
<feature type="chain" id="PRO_0000147500" description="Methyl-coenzyme M reductase operon protein D">
    <location>
        <begin position="1"/>
        <end position="159"/>
    </location>
</feature>
<dbReference type="EMBL" id="X07793">
    <property type="protein sequence ID" value="CAA30634.1"/>
    <property type="molecule type" value="Genomic_DNA"/>
</dbReference>
<dbReference type="PIR" id="S03258">
    <property type="entry name" value="S03258"/>
</dbReference>
<dbReference type="SMR" id="P11565"/>
<dbReference type="GO" id="GO:0015948">
    <property type="term" value="P:methanogenesis"/>
    <property type="evidence" value="ECO:0007669"/>
    <property type="project" value="UniProtKB-KW"/>
</dbReference>
<dbReference type="InterPro" id="IPR003901">
    <property type="entry name" value="Me_CoM_Rdtase_D"/>
</dbReference>
<dbReference type="NCBIfam" id="TIGR03260">
    <property type="entry name" value="met_CoM_red_D"/>
    <property type="match status" value="1"/>
</dbReference>
<dbReference type="Pfam" id="PF02505">
    <property type="entry name" value="MCR_D"/>
    <property type="match status" value="1"/>
</dbReference>
<dbReference type="PIRSF" id="PIRSF005636">
    <property type="entry name" value="McrD"/>
    <property type="match status" value="1"/>
</dbReference>
<organism>
    <name type="scientific">Methanococcus voltae</name>
    <dbReference type="NCBI Taxonomy" id="2188"/>
    <lineage>
        <taxon>Archaea</taxon>
        <taxon>Methanobacteriati</taxon>
        <taxon>Methanobacteriota</taxon>
        <taxon>Methanomada group</taxon>
        <taxon>Methanococci</taxon>
        <taxon>Methanococcales</taxon>
        <taxon>Methanococcaceae</taxon>
        <taxon>Methanococcus</taxon>
    </lineage>
</organism>
<sequence>MIEIEVFPHRFLKATTTEKFLNSAYSLETVQRVIMHGESLPQKVNYGPAKGTPVNHSERKLINVQGVEVQLTLQVGRFWILLDDETELSKIDEICKELFQYGYKVSEGRFIKDSPTVTDYMKYGESFVNNIDKRMLGVTDPRSRFENSVSLIPKSEKGE</sequence>
<comment type="subunit">
    <text>MCR is composed of three subunits: alpha, beta, and gamma. The function of proteins C and D is not known.</text>
</comment>
<accession>P11565</accession>
<gene>
    <name type="primary">mcrD</name>
</gene>
<name>MCRD_METVO</name>
<keyword id="KW-0484">Methanogenesis</keyword>
<proteinExistence type="predicted"/>